<evidence type="ECO:0000250" key="1"/>
<evidence type="ECO:0000255" key="2"/>
<evidence type="ECO:0000305" key="3"/>
<gene>
    <name type="primary">mnhE2</name>
    <name type="synonym">mrpE2</name>
    <name type="ordered locus">NWMN_0597</name>
</gene>
<comment type="subunit">
    <text evidence="1">May form a heterooligomeric complex that consists of seven subunits: mnhA2, mnhB2, mnhC2, mnhD2, mnhE2, mnhF2 and mnhG2.</text>
</comment>
<comment type="subcellular location">
    <subcellularLocation>
        <location evidence="3">Cell membrane</location>
        <topology evidence="3">Multi-pass membrane protein</topology>
    </subcellularLocation>
</comment>
<comment type="similarity">
    <text evidence="3">Belongs to the CPA3 antiporters (TC 2.A.63) subunit E family.</text>
</comment>
<keyword id="KW-0050">Antiport</keyword>
<keyword id="KW-1003">Cell membrane</keyword>
<keyword id="KW-0406">Ion transport</keyword>
<keyword id="KW-0472">Membrane</keyword>
<keyword id="KW-0812">Transmembrane</keyword>
<keyword id="KW-1133">Transmembrane helix</keyword>
<keyword id="KW-0813">Transport</keyword>
<feature type="chain" id="PRO_0000372221" description="Putative antiporter subunit mnhE2">
    <location>
        <begin position="1"/>
        <end position="160"/>
    </location>
</feature>
<feature type="transmembrane region" description="Helical" evidence="2">
    <location>
        <begin position="22"/>
        <end position="42"/>
    </location>
</feature>
<feature type="transmembrane region" description="Helical" evidence="2">
    <location>
        <begin position="55"/>
        <end position="75"/>
    </location>
</feature>
<feature type="transmembrane region" description="Helical" evidence="2">
    <location>
        <begin position="100"/>
        <end position="120"/>
    </location>
</feature>
<sequence length="160" mass="18851">MNQIVLNIIIAFLWVLFQDEDHFKFSTFFSGYLIGLIVIYILHRFFSDDFYVRKIWVAIKFLGVYLYQLITSSISTINYILFKTKDMNPGLLSYETRLTSDWSITFLTILIIITPGSTVIRISQDSKKFFIHSIDVSEKEKDSLLRSIKHYEDLILEVSR</sequence>
<organism>
    <name type="scientific">Staphylococcus aureus (strain Newman)</name>
    <dbReference type="NCBI Taxonomy" id="426430"/>
    <lineage>
        <taxon>Bacteria</taxon>
        <taxon>Bacillati</taxon>
        <taxon>Bacillota</taxon>
        <taxon>Bacilli</taxon>
        <taxon>Bacillales</taxon>
        <taxon>Staphylococcaceae</taxon>
        <taxon>Staphylococcus</taxon>
    </lineage>
</organism>
<dbReference type="EMBL" id="AP009351">
    <property type="protein sequence ID" value="BAF66869.1"/>
    <property type="molecule type" value="Genomic_DNA"/>
</dbReference>
<dbReference type="RefSeq" id="WP_001071973.1">
    <property type="nucleotide sequence ID" value="NZ_JBBIAE010000002.1"/>
</dbReference>
<dbReference type="SMR" id="A6QET7"/>
<dbReference type="KEGG" id="sae:NWMN_0597"/>
<dbReference type="HOGENOM" id="CLU_086615_3_2_9"/>
<dbReference type="Proteomes" id="UP000006386">
    <property type="component" value="Chromosome"/>
</dbReference>
<dbReference type="GO" id="GO:0005886">
    <property type="term" value="C:plasma membrane"/>
    <property type="evidence" value="ECO:0007669"/>
    <property type="project" value="UniProtKB-SubCell"/>
</dbReference>
<dbReference type="GO" id="GO:0015297">
    <property type="term" value="F:antiporter activity"/>
    <property type="evidence" value="ECO:0007669"/>
    <property type="project" value="UniProtKB-KW"/>
</dbReference>
<dbReference type="GO" id="GO:0008324">
    <property type="term" value="F:monoatomic cation transmembrane transporter activity"/>
    <property type="evidence" value="ECO:0007669"/>
    <property type="project" value="InterPro"/>
</dbReference>
<dbReference type="InterPro" id="IPR002758">
    <property type="entry name" value="Cation_antiport_E"/>
</dbReference>
<dbReference type="NCBIfam" id="NF006517">
    <property type="entry name" value="PRK08965.1-1"/>
    <property type="match status" value="1"/>
</dbReference>
<dbReference type="PANTHER" id="PTHR34584">
    <property type="entry name" value="NA(+)/H(+) ANTIPORTER SUBUNIT E1"/>
    <property type="match status" value="1"/>
</dbReference>
<dbReference type="PANTHER" id="PTHR34584:SF1">
    <property type="entry name" value="NA(+)_H(+) ANTIPORTER SUBUNIT E1"/>
    <property type="match status" value="1"/>
</dbReference>
<dbReference type="Pfam" id="PF01899">
    <property type="entry name" value="MNHE"/>
    <property type="match status" value="1"/>
</dbReference>
<dbReference type="PIRSF" id="PIRSF019239">
    <property type="entry name" value="MrpE"/>
    <property type="match status" value="1"/>
</dbReference>
<proteinExistence type="inferred from homology"/>
<reference key="1">
    <citation type="journal article" date="2008" name="J. Bacteriol.">
        <title>Genome sequence of Staphylococcus aureus strain Newman and comparative analysis of staphylococcal genomes: polymorphism and evolution of two major pathogenicity islands.</title>
        <authorList>
            <person name="Baba T."/>
            <person name="Bae T."/>
            <person name="Schneewind O."/>
            <person name="Takeuchi F."/>
            <person name="Hiramatsu K."/>
        </authorList>
    </citation>
    <scope>NUCLEOTIDE SEQUENCE [LARGE SCALE GENOMIC DNA]</scope>
    <source>
        <strain>Newman</strain>
    </source>
</reference>
<protein>
    <recommendedName>
        <fullName>Putative antiporter subunit mnhE2</fullName>
    </recommendedName>
    <alternativeName>
        <fullName>Mrp complex subunit E2</fullName>
    </alternativeName>
    <alternativeName>
        <fullName>Putative NADH-ubiquinone oxidoreductase subunit mnhE2</fullName>
    </alternativeName>
</protein>
<accession>A6QET7</accession>
<name>MNHE2_STAAE</name>